<name>STE20_ASPOR</name>
<dbReference type="EC" id="2.7.11.1"/>
<dbReference type="EMBL" id="BA000050">
    <property type="protein sequence ID" value="BAE57472.1"/>
    <property type="molecule type" value="Genomic_DNA"/>
</dbReference>
<dbReference type="SMR" id="Q2ULU3"/>
<dbReference type="STRING" id="510516.Q2ULU3"/>
<dbReference type="EnsemblFungi" id="BAE57472">
    <property type="protein sequence ID" value="BAE57472"/>
    <property type="gene ID" value="AO090003000267"/>
</dbReference>
<dbReference type="VEuPathDB" id="FungiDB:AO090003000267"/>
<dbReference type="HOGENOM" id="CLU_000288_26_1_1"/>
<dbReference type="OMA" id="MVDIMKF"/>
<dbReference type="Proteomes" id="UP000006564">
    <property type="component" value="Chromosome 2"/>
</dbReference>
<dbReference type="GO" id="GO:0005737">
    <property type="term" value="C:cytoplasm"/>
    <property type="evidence" value="ECO:0007669"/>
    <property type="project" value="UniProtKB-SubCell"/>
</dbReference>
<dbReference type="GO" id="GO:0000131">
    <property type="term" value="C:incipient cellular bud site"/>
    <property type="evidence" value="ECO:0007669"/>
    <property type="project" value="EnsemblFungi"/>
</dbReference>
<dbReference type="GO" id="GO:0043332">
    <property type="term" value="C:mating projection tip"/>
    <property type="evidence" value="ECO:0007669"/>
    <property type="project" value="EnsemblFungi"/>
</dbReference>
<dbReference type="GO" id="GO:0005634">
    <property type="term" value="C:nucleus"/>
    <property type="evidence" value="ECO:0007669"/>
    <property type="project" value="UniProtKB-SubCell"/>
</dbReference>
<dbReference type="GO" id="GO:0005524">
    <property type="term" value="F:ATP binding"/>
    <property type="evidence" value="ECO:0007669"/>
    <property type="project" value="UniProtKB-KW"/>
</dbReference>
<dbReference type="GO" id="GO:0044025">
    <property type="term" value="F:histone H2BS14 kinase activity"/>
    <property type="evidence" value="ECO:0007669"/>
    <property type="project" value="EnsemblFungi"/>
</dbReference>
<dbReference type="GO" id="GO:0008349">
    <property type="term" value="F:MAP kinase kinase kinase kinase activity"/>
    <property type="evidence" value="ECO:0007669"/>
    <property type="project" value="EnsemblFungi"/>
</dbReference>
<dbReference type="GO" id="GO:0106310">
    <property type="term" value="F:protein serine kinase activity"/>
    <property type="evidence" value="ECO:0007669"/>
    <property type="project" value="RHEA"/>
</dbReference>
<dbReference type="GO" id="GO:0007121">
    <property type="term" value="P:bipolar cellular bud site selection"/>
    <property type="evidence" value="ECO:0007669"/>
    <property type="project" value="EnsemblFungi"/>
</dbReference>
<dbReference type="GO" id="GO:0007118">
    <property type="term" value="P:budding cell apical bud growth"/>
    <property type="evidence" value="ECO:0007669"/>
    <property type="project" value="EnsemblFungi"/>
</dbReference>
<dbReference type="GO" id="GO:0070301">
    <property type="term" value="P:cellular response to hydrogen peroxide"/>
    <property type="evidence" value="ECO:0007669"/>
    <property type="project" value="EnsemblFungi"/>
</dbReference>
<dbReference type="GO" id="GO:0001403">
    <property type="term" value="P:invasive growth in response to glucose limitation"/>
    <property type="evidence" value="ECO:0007669"/>
    <property type="project" value="EnsemblFungi"/>
</dbReference>
<dbReference type="GO" id="GO:0010629">
    <property type="term" value="P:negative regulation of gene expression"/>
    <property type="evidence" value="ECO:0007669"/>
    <property type="project" value="EnsemblFungi"/>
</dbReference>
<dbReference type="GO" id="GO:2000910">
    <property type="term" value="P:negative regulation of sterol import"/>
    <property type="evidence" value="ECO:0007669"/>
    <property type="project" value="EnsemblFungi"/>
</dbReference>
<dbReference type="GO" id="GO:0000122">
    <property type="term" value="P:negative regulation of transcription by RNA polymerase II"/>
    <property type="evidence" value="ECO:0007669"/>
    <property type="project" value="EnsemblFungi"/>
</dbReference>
<dbReference type="GO" id="GO:0007232">
    <property type="term" value="P:osmosensory signaling pathway via Sho1 osmosensor"/>
    <property type="evidence" value="ECO:0007669"/>
    <property type="project" value="EnsemblFungi"/>
</dbReference>
<dbReference type="GO" id="GO:0000750">
    <property type="term" value="P:pheromone-dependent signal transduction involved in conjugation with cellular fusion"/>
    <property type="evidence" value="ECO:0007669"/>
    <property type="project" value="EnsemblFungi"/>
</dbReference>
<dbReference type="GO" id="GO:0043065">
    <property type="term" value="P:positive regulation of apoptotic process"/>
    <property type="evidence" value="ECO:0007669"/>
    <property type="project" value="EnsemblFungi"/>
</dbReference>
<dbReference type="GO" id="GO:0007124">
    <property type="term" value="P:pseudohyphal growth"/>
    <property type="evidence" value="ECO:0007669"/>
    <property type="project" value="EnsemblFungi"/>
</dbReference>
<dbReference type="GO" id="GO:0007096">
    <property type="term" value="P:regulation of exit from mitosis"/>
    <property type="evidence" value="ECO:0007669"/>
    <property type="project" value="EnsemblFungi"/>
</dbReference>
<dbReference type="GO" id="GO:0001402">
    <property type="term" value="P:signal transduction involved in filamentous growth"/>
    <property type="evidence" value="ECO:0007669"/>
    <property type="project" value="EnsemblFungi"/>
</dbReference>
<dbReference type="GO" id="GO:0035376">
    <property type="term" value="P:sterol import"/>
    <property type="evidence" value="ECO:0007669"/>
    <property type="project" value="EnsemblFungi"/>
</dbReference>
<dbReference type="GO" id="GO:0034063">
    <property type="term" value="P:stress granule assembly"/>
    <property type="evidence" value="ECO:0007669"/>
    <property type="project" value="EnsemblFungi"/>
</dbReference>
<dbReference type="GO" id="GO:0000011">
    <property type="term" value="P:vacuole inheritance"/>
    <property type="evidence" value="ECO:0007669"/>
    <property type="project" value="EnsemblFungi"/>
</dbReference>
<dbReference type="CDD" id="cd01093">
    <property type="entry name" value="CRIB_PAK_like"/>
    <property type="match status" value="1"/>
</dbReference>
<dbReference type="CDD" id="cd06614">
    <property type="entry name" value="STKc_PAK"/>
    <property type="match status" value="1"/>
</dbReference>
<dbReference type="FunFam" id="1.10.510.10:FF:000011">
    <property type="entry name" value="Non-specific serine/threonine protein kinase"/>
    <property type="match status" value="1"/>
</dbReference>
<dbReference type="FunFam" id="3.30.200.20:FF:000385">
    <property type="entry name" value="Non-specific serine/threonine protein kinase"/>
    <property type="match status" value="1"/>
</dbReference>
<dbReference type="FunFam" id="3.90.810.10:FF:000007">
    <property type="entry name" value="Non-specific serine/threonine protein kinase"/>
    <property type="match status" value="1"/>
</dbReference>
<dbReference type="Gene3D" id="3.90.810.10">
    <property type="entry name" value="CRIB domain"/>
    <property type="match status" value="1"/>
</dbReference>
<dbReference type="Gene3D" id="3.30.200.20">
    <property type="entry name" value="Phosphorylase Kinase, domain 1"/>
    <property type="match status" value="1"/>
</dbReference>
<dbReference type="Gene3D" id="1.10.510.10">
    <property type="entry name" value="Transferase(Phosphotransferase) domain 1"/>
    <property type="match status" value="1"/>
</dbReference>
<dbReference type="InterPro" id="IPR000095">
    <property type="entry name" value="CRIB_dom"/>
</dbReference>
<dbReference type="InterPro" id="IPR036936">
    <property type="entry name" value="CRIB_dom_sf"/>
</dbReference>
<dbReference type="InterPro" id="IPR011009">
    <property type="entry name" value="Kinase-like_dom_sf"/>
</dbReference>
<dbReference type="InterPro" id="IPR051931">
    <property type="entry name" value="PAK3-like"/>
</dbReference>
<dbReference type="InterPro" id="IPR033923">
    <property type="entry name" value="PAK_BD"/>
</dbReference>
<dbReference type="InterPro" id="IPR000719">
    <property type="entry name" value="Prot_kinase_dom"/>
</dbReference>
<dbReference type="InterPro" id="IPR017441">
    <property type="entry name" value="Protein_kinase_ATP_BS"/>
</dbReference>
<dbReference type="InterPro" id="IPR008271">
    <property type="entry name" value="Ser/Thr_kinase_AS"/>
</dbReference>
<dbReference type="PANTHER" id="PTHR45832">
    <property type="entry name" value="SERINE/THREONINE-PROTEIN KINASE SAMKA-RELATED-RELATED"/>
    <property type="match status" value="1"/>
</dbReference>
<dbReference type="PANTHER" id="PTHR45832:SF22">
    <property type="entry name" value="SERINE_THREONINE-PROTEIN KINASE SAMKA-RELATED"/>
    <property type="match status" value="1"/>
</dbReference>
<dbReference type="Pfam" id="PF00786">
    <property type="entry name" value="PBD"/>
    <property type="match status" value="1"/>
</dbReference>
<dbReference type="Pfam" id="PF00069">
    <property type="entry name" value="Pkinase"/>
    <property type="match status" value="1"/>
</dbReference>
<dbReference type="SMART" id="SM00285">
    <property type="entry name" value="PBD"/>
    <property type="match status" value="1"/>
</dbReference>
<dbReference type="SMART" id="SM00220">
    <property type="entry name" value="S_TKc"/>
    <property type="match status" value="1"/>
</dbReference>
<dbReference type="SUPFAM" id="SSF56112">
    <property type="entry name" value="Protein kinase-like (PK-like)"/>
    <property type="match status" value="1"/>
</dbReference>
<dbReference type="PROSITE" id="PS50108">
    <property type="entry name" value="CRIB"/>
    <property type="match status" value="1"/>
</dbReference>
<dbReference type="PROSITE" id="PS00107">
    <property type="entry name" value="PROTEIN_KINASE_ATP"/>
    <property type="match status" value="1"/>
</dbReference>
<dbReference type="PROSITE" id="PS50011">
    <property type="entry name" value="PROTEIN_KINASE_DOM"/>
    <property type="match status" value="1"/>
</dbReference>
<dbReference type="PROSITE" id="PS00108">
    <property type="entry name" value="PROTEIN_KINASE_ST"/>
    <property type="match status" value="1"/>
</dbReference>
<evidence type="ECO:0000250" key="1"/>
<evidence type="ECO:0000255" key="2">
    <source>
        <dbReference type="PROSITE-ProRule" id="PRU00057"/>
    </source>
</evidence>
<evidence type="ECO:0000255" key="3">
    <source>
        <dbReference type="PROSITE-ProRule" id="PRU00159"/>
    </source>
</evidence>
<evidence type="ECO:0000255" key="4">
    <source>
        <dbReference type="PROSITE-ProRule" id="PRU10027"/>
    </source>
</evidence>
<evidence type="ECO:0000256" key="5">
    <source>
        <dbReference type="SAM" id="MobiDB-lite"/>
    </source>
</evidence>
<evidence type="ECO:0000305" key="6"/>
<organism>
    <name type="scientific">Aspergillus oryzae (strain ATCC 42149 / RIB 40)</name>
    <name type="common">Yellow koji mold</name>
    <dbReference type="NCBI Taxonomy" id="510516"/>
    <lineage>
        <taxon>Eukaryota</taxon>
        <taxon>Fungi</taxon>
        <taxon>Dikarya</taxon>
        <taxon>Ascomycota</taxon>
        <taxon>Pezizomycotina</taxon>
        <taxon>Eurotiomycetes</taxon>
        <taxon>Eurotiomycetidae</taxon>
        <taxon>Eurotiales</taxon>
        <taxon>Aspergillaceae</taxon>
        <taxon>Aspergillus</taxon>
        <taxon>Aspergillus subgen. Circumdati</taxon>
    </lineage>
</organism>
<proteinExistence type="inferred from homology"/>
<gene>
    <name type="primary">ste20</name>
    <name type="ORF">AO090003000267</name>
</gene>
<protein>
    <recommendedName>
        <fullName>Serine/threonine-protein kinase ste20</fullName>
        <ecNumber>2.7.11.1</ecNumber>
    </recommendedName>
</protein>
<accession>Q2ULU3</accession>
<reference key="1">
    <citation type="journal article" date="2005" name="Nature">
        <title>Genome sequencing and analysis of Aspergillus oryzae.</title>
        <authorList>
            <person name="Machida M."/>
            <person name="Asai K."/>
            <person name="Sano M."/>
            <person name="Tanaka T."/>
            <person name="Kumagai T."/>
            <person name="Terai G."/>
            <person name="Kusumoto K."/>
            <person name="Arima T."/>
            <person name="Akita O."/>
            <person name="Kashiwagi Y."/>
            <person name="Abe K."/>
            <person name="Gomi K."/>
            <person name="Horiuchi H."/>
            <person name="Kitamoto K."/>
            <person name="Kobayashi T."/>
            <person name="Takeuchi M."/>
            <person name="Denning D.W."/>
            <person name="Galagan J.E."/>
            <person name="Nierman W.C."/>
            <person name="Yu J."/>
            <person name="Archer D.B."/>
            <person name="Bennett J.W."/>
            <person name="Bhatnagar D."/>
            <person name="Cleveland T.E."/>
            <person name="Fedorova N.D."/>
            <person name="Gotoh O."/>
            <person name="Horikawa H."/>
            <person name="Hosoyama A."/>
            <person name="Ichinomiya M."/>
            <person name="Igarashi R."/>
            <person name="Iwashita K."/>
            <person name="Juvvadi P.R."/>
            <person name="Kato M."/>
            <person name="Kato Y."/>
            <person name="Kin T."/>
            <person name="Kokubun A."/>
            <person name="Maeda H."/>
            <person name="Maeyama N."/>
            <person name="Maruyama J."/>
            <person name="Nagasaki H."/>
            <person name="Nakajima T."/>
            <person name="Oda K."/>
            <person name="Okada K."/>
            <person name="Paulsen I."/>
            <person name="Sakamoto K."/>
            <person name="Sawano T."/>
            <person name="Takahashi M."/>
            <person name="Takase K."/>
            <person name="Terabayashi Y."/>
            <person name="Wortman J.R."/>
            <person name="Yamada O."/>
            <person name="Yamagata Y."/>
            <person name="Anazawa H."/>
            <person name="Hata Y."/>
            <person name="Koide Y."/>
            <person name="Komori T."/>
            <person name="Koyama Y."/>
            <person name="Minetoki T."/>
            <person name="Suharnan S."/>
            <person name="Tanaka A."/>
            <person name="Isono K."/>
            <person name="Kuhara S."/>
            <person name="Ogasawara N."/>
            <person name="Kikuchi H."/>
        </authorList>
    </citation>
    <scope>NUCLEOTIDE SEQUENCE [LARGE SCALE GENOMIC DNA]</scope>
    <source>
        <strain>ATCC 42149 / RIB 40</strain>
    </source>
</reference>
<keyword id="KW-0067">ATP-binding</keyword>
<keyword id="KW-0963">Cytoplasm</keyword>
<keyword id="KW-0418">Kinase</keyword>
<keyword id="KW-0547">Nucleotide-binding</keyword>
<keyword id="KW-0539">Nucleus</keyword>
<keyword id="KW-0589">Pheromone response</keyword>
<keyword id="KW-1185">Reference proteome</keyword>
<keyword id="KW-0723">Serine/threonine-protein kinase</keyword>
<keyword id="KW-0808">Transferase</keyword>
<feature type="chain" id="PRO_0000237627" description="Serine/threonine-protein kinase ste20">
    <location>
        <begin position="1"/>
        <end position="848"/>
    </location>
</feature>
<feature type="domain" description="CRIB" evidence="2">
    <location>
        <begin position="228"/>
        <end position="241"/>
    </location>
</feature>
<feature type="domain" description="Protein kinase" evidence="3">
    <location>
        <begin position="567"/>
        <end position="818"/>
    </location>
</feature>
<feature type="region of interest" description="Disordered" evidence="5">
    <location>
        <begin position="1"/>
        <end position="208"/>
    </location>
</feature>
<feature type="region of interest" description="Disordered" evidence="5">
    <location>
        <begin position="306"/>
        <end position="547"/>
    </location>
</feature>
<feature type="compositionally biased region" description="Polar residues" evidence="5">
    <location>
        <begin position="65"/>
        <end position="102"/>
    </location>
</feature>
<feature type="compositionally biased region" description="Polar residues" evidence="5">
    <location>
        <begin position="152"/>
        <end position="171"/>
    </location>
</feature>
<feature type="compositionally biased region" description="Basic and acidic residues" evidence="5">
    <location>
        <begin position="183"/>
        <end position="196"/>
    </location>
</feature>
<feature type="compositionally biased region" description="Low complexity" evidence="5">
    <location>
        <begin position="308"/>
        <end position="327"/>
    </location>
</feature>
<feature type="compositionally biased region" description="Polar residues" evidence="5">
    <location>
        <begin position="328"/>
        <end position="338"/>
    </location>
</feature>
<feature type="compositionally biased region" description="Pro residues" evidence="5">
    <location>
        <begin position="427"/>
        <end position="439"/>
    </location>
</feature>
<feature type="compositionally biased region" description="Polar residues" evidence="5">
    <location>
        <begin position="441"/>
        <end position="451"/>
    </location>
</feature>
<feature type="compositionally biased region" description="Low complexity" evidence="5">
    <location>
        <begin position="468"/>
        <end position="515"/>
    </location>
</feature>
<feature type="compositionally biased region" description="Low complexity" evidence="5">
    <location>
        <begin position="527"/>
        <end position="537"/>
    </location>
</feature>
<feature type="active site" description="Proton acceptor" evidence="3 4">
    <location>
        <position position="686"/>
    </location>
</feature>
<feature type="binding site" evidence="3">
    <location>
        <begin position="573"/>
        <end position="581"/>
    </location>
    <ligand>
        <name>ATP</name>
        <dbReference type="ChEBI" id="CHEBI:30616"/>
    </ligand>
</feature>
<feature type="binding site" evidence="3">
    <location>
        <position position="596"/>
    </location>
    <ligand>
        <name>ATP</name>
        <dbReference type="ChEBI" id="CHEBI:30616"/>
    </ligand>
</feature>
<comment type="function">
    <text evidence="1">MAP4K component of the MAPK pathway required for the mating pheromone response and the regulation of cell polarity and cell cycle.</text>
</comment>
<comment type="catalytic activity">
    <reaction>
        <text>L-seryl-[protein] + ATP = O-phospho-L-seryl-[protein] + ADP + H(+)</text>
        <dbReference type="Rhea" id="RHEA:17989"/>
        <dbReference type="Rhea" id="RHEA-COMP:9863"/>
        <dbReference type="Rhea" id="RHEA-COMP:11604"/>
        <dbReference type="ChEBI" id="CHEBI:15378"/>
        <dbReference type="ChEBI" id="CHEBI:29999"/>
        <dbReference type="ChEBI" id="CHEBI:30616"/>
        <dbReference type="ChEBI" id="CHEBI:83421"/>
        <dbReference type="ChEBI" id="CHEBI:456216"/>
        <dbReference type="EC" id="2.7.11.1"/>
    </reaction>
</comment>
<comment type="catalytic activity">
    <reaction>
        <text>L-threonyl-[protein] + ATP = O-phospho-L-threonyl-[protein] + ADP + H(+)</text>
        <dbReference type="Rhea" id="RHEA:46608"/>
        <dbReference type="Rhea" id="RHEA-COMP:11060"/>
        <dbReference type="Rhea" id="RHEA-COMP:11605"/>
        <dbReference type="ChEBI" id="CHEBI:15378"/>
        <dbReference type="ChEBI" id="CHEBI:30013"/>
        <dbReference type="ChEBI" id="CHEBI:30616"/>
        <dbReference type="ChEBI" id="CHEBI:61977"/>
        <dbReference type="ChEBI" id="CHEBI:456216"/>
        <dbReference type="EC" id="2.7.11.1"/>
    </reaction>
</comment>
<comment type="subcellular location">
    <subcellularLocation>
        <location evidence="1">Cytoplasm</location>
    </subcellularLocation>
    <subcellularLocation>
        <location evidence="1">Nucleus</location>
    </subcellularLocation>
</comment>
<comment type="similarity">
    <text evidence="6">Belongs to the protein kinase superfamily. STE Ser/Thr protein kinase family. STE20 subfamily.</text>
</comment>
<sequence>MNHDSFSSLKFRRPSSKLHKDPPSIGSRMLKSQQSNTSLKRHPSAPVYPRSSASRSREHSRTRSNAYGSSTSSLDQNSGGPSPVLANNESGYFSGNHNTTKSRPPHSGRFSLNDQSSDELIGSPFDSRGMLSALQENTAESDRQPIQKPPTLRSQTTPDTRGLRQSASFTALHNRMDALVNRTDSDRSTNTKRYSDEGNGTKPVGRSKKASFSSFVNSMLGSPRGIKISAPENPVHVTHVGYDNQTGQFTGLPKEWQRLLQESGISKKEQEEHPQTMVDIMRFYEKNAQGDDEVWHKFDHAYAHHHPVTTSSSQPSSGGSTPYGTVGQRASSPTSPRFPQNHEGSFENPRAPPPIPRGAPAATQAMSPPVGGLVPNRAPPRPPAAANMTPARPAPQPPTTASYATTRPVQDPWPQFGTIPENAQPFGTPPIPESEPLPSGPQLSRSNSKANGATAPWVSPAVTPSPTQYQQQQEQAMATAQQAIASKQLDRSQSLRQQQAQQPKQKQATHPTPQQVSPVEDPSAALQQSARAVPAARPRQRARQSNAMDIRSRLVAICTPGDPTKMYYNLNKIGQGASGGVFTAYHNGTGSCVAIKQMNLDLQPKKDLIINEIIVMKDSKHKNIVNFLDSYLHGLDLWVVMEYMEGGSLTDVVTFNIMSEGQIAAVCRETLNGLQHLHSKGVIHRDIKSDNILLSLDGNIKLTDFGFCAQINDSHNKRNTMVGTPYWMAPEVVTRKEYGRKVDIWSLGIMAIEMIEGEPPYLTESPLRALYLIATNGTPTIKDEQSLTPVFRDFLHLALKVDPEKRASAHDLLKHPFMSFCAPLSHLAPLVKAARLSRAQEKAQKGGH</sequence>